<gene>
    <name type="primary">pucC</name>
</gene>
<name>PUCC_RHOCA</name>
<reference key="1">
    <citation type="journal article" date="1989" name="J. Bacteriol.">
        <title>Genes downstream from pucB and pucA are essential for formation of the B800-850 complex of Rhodobacter capsulatus.</title>
        <authorList>
            <person name="Tichy H.V."/>
            <person name="Oberle B."/>
            <person name="Stiehle H."/>
            <person name="Schiltz E."/>
            <person name="Drews G."/>
        </authorList>
    </citation>
    <scope>NUCLEOTIDE SEQUENCE [GENOMIC DNA]</scope>
</reference>
<reference key="2">
    <citation type="journal article" date="1991" name="EMBO J.">
        <title>Analysis of the Rhodobacter capsulatus puc operon: the pucC gene plays a central role in the regulation of LHII (B800-850 complex) expression.</title>
        <authorList>
            <person name="Tichy H.V."/>
            <person name="Albien K.-U."/>
            <person name="Gad'On N."/>
            <person name="Drews G."/>
        </authorList>
    </citation>
    <scope>SEQUENCE REVISION</scope>
    <scope>FUNCTION</scope>
</reference>
<reference key="3">
    <citation type="journal article" date="1996" name="J. Bacteriol.">
        <title>Topological analysis of the Rhodobacter capsulatus PucC protein and effects of C-terminal deletions on light-harvesting complex II.</title>
        <authorList>
            <person name="LeBlanc H.N."/>
            <person name="Beatty J.T."/>
        </authorList>
    </citation>
    <scope>TOPOLOGY</scope>
</reference>
<accession>P23462</accession>
<organism>
    <name type="scientific">Rhodobacter capsulatus</name>
    <name type="common">Rhodopseudomonas capsulata</name>
    <dbReference type="NCBI Taxonomy" id="1061"/>
    <lineage>
        <taxon>Bacteria</taxon>
        <taxon>Pseudomonadati</taxon>
        <taxon>Pseudomonadota</taxon>
        <taxon>Alphaproteobacteria</taxon>
        <taxon>Rhodobacterales</taxon>
        <taxon>Rhodobacter group</taxon>
        <taxon>Rhodobacter</taxon>
    </lineage>
</organism>
<evidence type="ECO:0000269" key="1">
    <source>
    </source>
</evidence>
<evidence type="ECO:0000305" key="2"/>
<evidence type="ECO:0000305" key="3">
    <source>
    </source>
</evidence>
<protein>
    <recommendedName>
        <fullName>Protein PucC</fullName>
    </recommendedName>
</protein>
<comment type="function">
    <text evidence="1">PucC is required for high-level transcription of the puc operon.</text>
</comment>
<comment type="subcellular location">
    <subcellularLocation>
        <location>Cell membrane</location>
        <topology>Multi-pass membrane protein</topology>
    </subcellularLocation>
</comment>
<comment type="similarity">
    <text evidence="2">Belongs to the PucC family.</text>
</comment>
<comment type="sequence caution" evidence="2">
    <conflict type="erroneous initiation">
        <sequence resource="EMBL-CDS" id="AAA26163"/>
    </conflict>
</comment>
<sequence>MGYRAFALKNLARHAPKYLPFADVASEEVPLSRLLRLSLFQITVGMTLTLLAGTLNRVMIVELAVPASLVSVMLAMPMLFAPFRTLIGFKSDTHKSALGLRRAPWIWKGTIYQFGGFAIMPFALLVLSGFGESVDAPRWIGMSAAALAFLLVGAGVHIVQTAGLALATDLVAEEDQPKVVGLMYVMLLFGMVISALVYGALLADYTPGRLIQVIQGTALASVVLNMAAMWKQEAVSRDRARQMETAEHPTFKEAFGLLMGRPGMLALLTVIALGTFGFGMADVLLEPYGGQALHLTVGETTKLTALFALGTLAGFGTASRVLGNGARPMRWSAGCTDRVPGFVAIIMSSLISQDGIWLFLAGTFAVGLGIGLFGHATLTATMRTAPADRIGLALGAWGAVQATAAGLGVALAGVVRDGLVALPGTFGSGVVGPYNTVFAIEALILIVAIAFAVPLLKRGGR</sequence>
<dbReference type="EMBL" id="M28510">
    <property type="protein sequence ID" value="AAA26163.1"/>
    <property type="status" value="ALT_INIT"/>
    <property type="molecule type" value="Genomic_DNA"/>
</dbReference>
<dbReference type="PIR" id="C33958">
    <property type="entry name" value="C33958"/>
</dbReference>
<dbReference type="SMR" id="P23462"/>
<dbReference type="TCDB" id="2.A.1.41.2">
    <property type="family name" value="the major facilitator superfamily (mfs)"/>
</dbReference>
<dbReference type="GO" id="GO:0030076">
    <property type="term" value="C:light-harvesting complex"/>
    <property type="evidence" value="ECO:0007669"/>
    <property type="project" value="UniProtKB-KW"/>
</dbReference>
<dbReference type="GO" id="GO:0005886">
    <property type="term" value="C:plasma membrane"/>
    <property type="evidence" value="ECO:0007669"/>
    <property type="project" value="UniProtKB-SubCell"/>
</dbReference>
<dbReference type="CDD" id="cd06176">
    <property type="entry name" value="MFS_BCD_PucC-like"/>
    <property type="match status" value="1"/>
</dbReference>
<dbReference type="Gene3D" id="1.20.1250.20">
    <property type="entry name" value="MFS general substrate transporter like domains"/>
    <property type="match status" value="1"/>
</dbReference>
<dbReference type="InterPro" id="IPR036259">
    <property type="entry name" value="MFS_trans_sf"/>
</dbReference>
<dbReference type="InterPro" id="IPR026036">
    <property type="entry name" value="PucC"/>
</dbReference>
<dbReference type="InterPro" id="IPR004896">
    <property type="entry name" value="PucC-rel"/>
</dbReference>
<dbReference type="PANTHER" id="PTHR23538">
    <property type="entry name" value="44.5 KD BACTERIOCHLOROPHYLL SYNTHASE SUBUNIT"/>
    <property type="match status" value="1"/>
</dbReference>
<dbReference type="PANTHER" id="PTHR23538:SF1">
    <property type="entry name" value="44.5 KD BACTERIOCHLOROPHYLL SYNTHASE SUBUNIT"/>
    <property type="match status" value="1"/>
</dbReference>
<dbReference type="Pfam" id="PF03209">
    <property type="entry name" value="PUCC"/>
    <property type="match status" value="1"/>
</dbReference>
<dbReference type="PIRSF" id="PIRSF016565">
    <property type="entry name" value="PucC"/>
    <property type="match status" value="1"/>
</dbReference>
<dbReference type="SUPFAM" id="SSF103473">
    <property type="entry name" value="MFS general substrate transporter"/>
    <property type="match status" value="1"/>
</dbReference>
<proteinExistence type="evidence at protein level"/>
<keyword id="KW-0042">Antenna complex</keyword>
<keyword id="KW-1003">Cell membrane</keyword>
<keyword id="KW-0472">Membrane</keyword>
<keyword id="KW-0812">Transmembrane</keyword>
<keyword id="KW-1133">Transmembrane helix</keyword>
<feature type="chain" id="PRO_0000099844" description="Protein PucC">
    <location>
        <begin position="1"/>
        <end position="461"/>
    </location>
</feature>
<feature type="topological domain" description="Cytoplasmic" evidence="3">
    <location>
        <begin position="1"/>
        <end position="36"/>
    </location>
</feature>
<feature type="transmembrane region" description="Helical" evidence="2">
    <location>
        <begin position="37"/>
        <end position="56"/>
    </location>
</feature>
<feature type="topological domain" description="Periplasmic" evidence="3">
    <location>
        <begin position="57"/>
        <end position="62"/>
    </location>
</feature>
<feature type="transmembrane region" description="Helical" evidence="2">
    <location>
        <begin position="63"/>
        <end position="83"/>
    </location>
</feature>
<feature type="topological domain" description="Cytoplasmic" evidence="3">
    <location>
        <begin position="84"/>
        <end position="109"/>
    </location>
</feature>
<feature type="transmembrane region" description="Helical" evidence="2">
    <location>
        <begin position="110"/>
        <end position="129"/>
    </location>
</feature>
<feature type="topological domain" description="Periplasmic" evidence="3">
    <location>
        <begin position="130"/>
        <end position="142"/>
    </location>
</feature>
<feature type="transmembrane region" description="Helical" evidence="2">
    <location>
        <begin position="143"/>
        <end position="163"/>
    </location>
</feature>
<feature type="topological domain" description="Cytoplasmic" evidence="3">
    <location>
        <begin position="164"/>
        <end position="182"/>
    </location>
</feature>
<feature type="transmembrane region" description="Helical" evidence="2">
    <location>
        <begin position="183"/>
        <end position="202"/>
    </location>
</feature>
<feature type="topological domain" description="Periplasmic" evidence="3">
    <location>
        <begin position="203"/>
        <end position="209"/>
    </location>
</feature>
<feature type="transmembrane region" description="Helical" evidence="2">
    <location>
        <begin position="210"/>
        <end position="228"/>
    </location>
</feature>
<feature type="topological domain" description="Cytoplasmic" evidence="3">
    <location>
        <begin position="229"/>
        <end position="261"/>
    </location>
</feature>
<feature type="transmembrane region" description="Helical" evidence="2">
    <location>
        <begin position="262"/>
        <end position="281"/>
    </location>
</feature>
<feature type="topological domain" description="Periplasmic" evidence="3">
    <location>
        <begin position="282"/>
        <end position="302"/>
    </location>
</feature>
<feature type="transmembrane region" description="Helical" evidence="2">
    <location>
        <begin position="303"/>
        <end position="319"/>
    </location>
</feature>
<feature type="topological domain" description="Cytoplasmic" evidence="3">
    <location>
        <begin position="320"/>
        <end position="338"/>
    </location>
</feature>
<feature type="transmembrane region" description="Helical" evidence="2">
    <location>
        <begin position="339"/>
        <end position="355"/>
    </location>
</feature>
<feature type="topological domain" description="Periplasmic" evidence="3">
    <location>
        <begin position="356"/>
        <end position="358"/>
    </location>
</feature>
<feature type="transmembrane region" description="Helical" evidence="2">
    <location>
        <begin position="359"/>
        <end position="376"/>
    </location>
</feature>
<feature type="topological domain" description="Cytoplasmic" evidence="3">
    <location>
        <begin position="377"/>
        <end position="394"/>
    </location>
</feature>
<feature type="transmembrane region" description="Helical" evidence="2">
    <location>
        <begin position="395"/>
        <end position="415"/>
    </location>
</feature>
<feature type="topological domain" description="Periplasmic" evidence="3">
    <location>
        <begin position="416"/>
        <end position="436"/>
    </location>
</feature>
<feature type="transmembrane region" description="Helical" evidence="2">
    <location>
        <begin position="437"/>
        <end position="456"/>
    </location>
</feature>
<feature type="topological domain" description="Cytoplasmic" evidence="3">
    <location>
        <begin position="457"/>
        <end position="461"/>
    </location>
</feature>